<name>MURE_COXBU</name>
<reference key="1">
    <citation type="journal article" date="2003" name="Proc. Natl. Acad. Sci. U.S.A.">
        <title>Complete genome sequence of the Q-fever pathogen, Coxiella burnetii.</title>
        <authorList>
            <person name="Seshadri R."/>
            <person name="Paulsen I.T."/>
            <person name="Eisen J.A."/>
            <person name="Read T.D."/>
            <person name="Nelson K.E."/>
            <person name="Nelson W.C."/>
            <person name="Ward N.L."/>
            <person name="Tettelin H."/>
            <person name="Davidsen T.M."/>
            <person name="Beanan M.J."/>
            <person name="DeBoy R.T."/>
            <person name="Daugherty S.C."/>
            <person name="Brinkac L.M."/>
            <person name="Madupu R."/>
            <person name="Dodson R.J."/>
            <person name="Khouri H.M."/>
            <person name="Lee K.H."/>
            <person name="Carty H.A."/>
            <person name="Scanlan D."/>
            <person name="Heinzen R.A."/>
            <person name="Thompson H.A."/>
            <person name="Samuel J.E."/>
            <person name="Fraser C.M."/>
            <person name="Heidelberg J.F."/>
        </authorList>
    </citation>
    <scope>NUCLEOTIDE SEQUENCE [LARGE SCALE GENOMIC DNA]</scope>
    <source>
        <strain>RSA 493 / Nine Mile phase I</strain>
    </source>
</reference>
<organism>
    <name type="scientific">Coxiella burnetii (strain RSA 493 / Nine Mile phase I)</name>
    <dbReference type="NCBI Taxonomy" id="227377"/>
    <lineage>
        <taxon>Bacteria</taxon>
        <taxon>Pseudomonadati</taxon>
        <taxon>Pseudomonadota</taxon>
        <taxon>Gammaproteobacteria</taxon>
        <taxon>Legionellales</taxon>
        <taxon>Coxiellaceae</taxon>
        <taxon>Coxiella</taxon>
    </lineage>
</organism>
<proteinExistence type="inferred from homology"/>
<accession>Q83F28</accession>
<dbReference type="EC" id="6.3.2.13" evidence="1"/>
<dbReference type="EMBL" id="AE016828">
    <property type="protein sequence ID" value="AAO89687.1"/>
    <property type="molecule type" value="Genomic_DNA"/>
</dbReference>
<dbReference type="RefSeq" id="NP_819173.1">
    <property type="nucleotide sequence ID" value="NC_002971.4"/>
</dbReference>
<dbReference type="RefSeq" id="WP_005769454.1">
    <property type="nucleotide sequence ID" value="NZ_CCYB01000063.1"/>
</dbReference>
<dbReference type="SMR" id="Q83F28"/>
<dbReference type="STRING" id="227377.CBU_0123"/>
<dbReference type="EnsemblBacteria" id="AAO89687">
    <property type="protein sequence ID" value="AAO89687"/>
    <property type="gene ID" value="CBU_0123"/>
</dbReference>
<dbReference type="GeneID" id="1207994"/>
<dbReference type="KEGG" id="cbu:CBU_0123"/>
<dbReference type="PATRIC" id="fig|227377.7.peg.126"/>
<dbReference type="eggNOG" id="COG0769">
    <property type="taxonomic scope" value="Bacteria"/>
</dbReference>
<dbReference type="HOGENOM" id="CLU_022291_4_1_6"/>
<dbReference type="OrthoDB" id="9800958at2"/>
<dbReference type="UniPathway" id="UPA00219"/>
<dbReference type="Proteomes" id="UP000002671">
    <property type="component" value="Chromosome"/>
</dbReference>
<dbReference type="GO" id="GO:0005737">
    <property type="term" value="C:cytoplasm"/>
    <property type="evidence" value="ECO:0007669"/>
    <property type="project" value="UniProtKB-SubCell"/>
</dbReference>
<dbReference type="GO" id="GO:0005524">
    <property type="term" value="F:ATP binding"/>
    <property type="evidence" value="ECO:0007669"/>
    <property type="project" value="UniProtKB-UniRule"/>
</dbReference>
<dbReference type="GO" id="GO:0000287">
    <property type="term" value="F:magnesium ion binding"/>
    <property type="evidence" value="ECO:0007669"/>
    <property type="project" value="UniProtKB-UniRule"/>
</dbReference>
<dbReference type="GO" id="GO:0008765">
    <property type="term" value="F:UDP-N-acetylmuramoylalanyl-D-glutamate-2,6-diaminopimelate ligase activity"/>
    <property type="evidence" value="ECO:0007669"/>
    <property type="project" value="UniProtKB-UniRule"/>
</dbReference>
<dbReference type="GO" id="GO:0051301">
    <property type="term" value="P:cell division"/>
    <property type="evidence" value="ECO:0007669"/>
    <property type="project" value="UniProtKB-KW"/>
</dbReference>
<dbReference type="GO" id="GO:0071555">
    <property type="term" value="P:cell wall organization"/>
    <property type="evidence" value="ECO:0007669"/>
    <property type="project" value="UniProtKB-KW"/>
</dbReference>
<dbReference type="GO" id="GO:0009252">
    <property type="term" value="P:peptidoglycan biosynthetic process"/>
    <property type="evidence" value="ECO:0007669"/>
    <property type="project" value="UniProtKB-UniRule"/>
</dbReference>
<dbReference type="GO" id="GO:0008360">
    <property type="term" value="P:regulation of cell shape"/>
    <property type="evidence" value="ECO:0007669"/>
    <property type="project" value="UniProtKB-KW"/>
</dbReference>
<dbReference type="FunFam" id="3.90.190.20:FF:000006">
    <property type="entry name" value="UDP-N-acetylmuramoyl-L-alanyl-D-glutamate--2,6-diaminopimelate ligase"/>
    <property type="match status" value="1"/>
</dbReference>
<dbReference type="Gene3D" id="3.90.190.20">
    <property type="entry name" value="Mur ligase, C-terminal domain"/>
    <property type="match status" value="1"/>
</dbReference>
<dbReference type="Gene3D" id="3.40.1190.10">
    <property type="entry name" value="Mur-like, catalytic domain"/>
    <property type="match status" value="1"/>
</dbReference>
<dbReference type="Gene3D" id="3.40.1390.10">
    <property type="entry name" value="MurE/MurF, N-terminal domain"/>
    <property type="match status" value="1"/>
</dbReference>
<dbReference type="HAMAP" id="MF_00208">
    <property type="entry name" value="MurE"/>
    <property type="match status" value="1"/>
</dbReference>
<dbReference type="InterPro" id="IPR036565">
    <property type="entry name" value="Mur-like_cat_sf"/>
</dbReference>
<dbReference type="InterPro" id="IPR004101">
    <property type="entry name" value="Mur_ligase_C"/>
</dbReference>
<dbReference type="InterPro" id="IPR036615">
    <property type="entry name" value="Mur_ligase_C_dom_sf"/>
</dbReference>
<dbReference type="InterPro" id="IPR013221">
    <property type="entry name" value="Mur_ligase_cen"/>
</dbReference>
<dbReference type="InterPro" id="IPR000713">
    <property type="entry name" value="Mur_ligase_N"/>
</dbReference>
<dbReference type="InterPro" id="IPR035911">
    <property type="entry name" value="MurE/MurF_N"/>
</dbReference>
<dbReference type="InterPro" id="IPR005761">
    <property type="entry name" value="UDP-N-AcMur-Glu-dNH2Pim_ligase"/>
</dbReference>
<dbReference type="NCBIfam" id="TIGR01085">
    <property type="entry name" value="murE"/>
    <property type="match status" value="1"/>
</dbReference>
<dbReference type="NCBIfam" id="NF001124">
    <property type="entry name" value="PRK00139.1-2"/>
    <property type="match status" value="1"/>
</dbReference>
<dbReference type="NCBIfam" id="NF001126">
    <property type="entry name" value="PRK00139.1-4"/>
    <property type="match status" value="1"/>
</dbReference>
<dbReference type="PANTHER" id="PTHR23135">
    <property type="entry name" value="MUR LIGASE FAMILY MEMBER"/>
    <property type="match status" value="1"/>
</dbReference>
<dbReference type="PANTHER" id="PTHR23135:SF4">
    <property type="entry name" value="UDP-N-ACETYLMURAMOYL-L-ALANYL-D-GLUTAMATE--2,6-DIAMINOPIMELATE LIGASE MURE HOMOLOG, CHLOROPLASTIC"/>
    <property type="match status" value="1"/>
</dbReference>
<dbReference type="Pfam" id="PF01225">
    <property type="entry name" value="Mur_ligase"/>
    <property type="match status" value="1"/>
</dbReference>
<dbReference type="Pfam" id="PF02875">
    <property type="entry name" value="Mur_ligase_C"/>
    <property type="match status" value="1"/>
</dbReference>
<dbReference type="Pfam" id="PF08245">
    <property type="entry name" value="Mur_ligase_M"/>
    <property type="match status" value="1"/>
</dbReference>
<dbReference type="SUPFAM" id="SSF53623">
    <property type="entry name" value="MurD-like peptide ligases, catalytic domain"/>
    <property type="match status" value="1"/>
</dbReference>
<dbReference type="SUPFAM" id="SSF53244">
    <property type="entry name" value="MurD-like peptide ligases, peptide-binding domain"/>
    <property type="match status" value="1"/>
</dbReference>
<dbReference type="SUPFAM" id="SSF63418">
    <property type="entry name" value="MurE/MurF N-terminal domain"/>
    <property type="match status" value="1"/>
</dbReference>
<comment type="function">
    <text evidence="1">Catalyzes the addition of meso-diaminopimelic acid to the nucleotide precursor UDP-N-acetylmuramoyl-L-alanyl-D-glutamate (UMAG) in the biosynthesis of bacterial cell-wall peptidoglycan.</text>
</comment>
<comment type="catalytic activity">
    <reaction evidence="1">
        <text>UDP-N-acetyl-alpha-D-muramoyl-L-alanyl-D-glutamate + meso-2,6-diaminopimelate + ATP = UDP-N-acetyl-alpha-D-muramoyl-L-alanyl-gamma-D-glutamyl-meso-2,6-diaminopimelate + ADP + phosphate + H(+)</text>
        <dbReference type="Rhea" id="RHEA:23676"/>
        <dbReference type="ChEBI" id="CHEBI:15378"/>
        <dbReference type="ChEBI" id="CHEBI:30616"/>
        <dbReference type="ChEBI" id="CHEBI:43474"/>
        <dbReference type="ChEBI" id="CHEBI:57791"/>
        <dbReference type="ChEBI" id="CHEBI:83900"/>
        <dbReference type="ChEBI" id="CHEBI:83905"/>
        <dbReference type="ChEBI" id="CHEBI:456216"/>
        <dbReference type="EC" id="6.3.2.13"/>
    </reaction>
</comment>
<comment type="cofactor">
    <cofactor evidence="1">
        <name>Mg(2+)</name>
        <dbReference type="ChEBI" id="CHEBI:18420"/>
    </cofactor>
</comment>
<comment type="pathway">
    <text evidence="1">Cell wall biogenesis; peptidoglycan biosynthesis.</text>
</comment>
<comment type="subcellular location">
    <subcellularLocation>
        <location evidence="1">Cytoplasm</location>
    </subcellularLocation>
</comment>
<comment type="PTM">
    <text evidence="1">Carboxylation is probably crucial for Mg(2+) binding and, consequently, for the gamma-phosphate positioning of ATP.</text>
</comment>
<comment type="similarity">
    <text evidence="1">Belongs to the MurCDEF family. MurE subfamily.</text>
</comment>
<protein>
    <recommendedName>
        <fullName evidence="1">UDP-N-acetylmuramoyl-L-alanyl-D-glutamate--2,6-diaminopimelate ligase</fullName>
        <ecNumber evidence="1">6.3.2.13</ecNumber>
    </recommendedName>
    <alternativeName>
        <fullName evidence="1">Meso-A2pm-adding enzyme</fullName>
    </alternativeName>
    <alternativeName>
        <fullName evidence="1">Meso-diaminopimelate-adding enzyme</fullName>
    </alternativeName>
    <alternativeName>
        <fullName evidence="1">UDP-MurNAc-L-Ala-D-Glu:meso-diaminopimelate ligase</fullName>
    </alternativeName>
    <alternativeName>
        <fullName evidence="1">UDP-MurNAc-tripeptide synthetase</fullName>
    </alternativeName>
    <alternativeName>
        <fullName evidence="1">UDP-N-acetylmuramyl-tripeptide synthetase</fullName>
    </alternativeName>
</protein>
<feature type="chain" id="PRO_0000101891" description="UDP-N-acetylmuramoyl-L-alanyl-D-glutamate--2,6-diaminopimelate ligase">
    <location>
        <begin position="1"/>
        <end position="489"/>
    </location>
</feature>
<feature type="short sequence motif" description="Meso-diaminopimelate recognition motif">
    <location>
        <begin position="412"/>
        <end position="415"/>
    </location>
</feature>
<feature type="binding site" evidence="1">
    <location>
        <position position="30"/>
    </location>
    <ligand>
        <name>UDP-N-acetyl-alpha-D-muramoyl-L-alanyl-D-glutamate</name>
        <dbReference type="ChEBI" id="CHEBI:83900"/>
    </ligand>
</feature>
<feature type="binding site" evidence="1">
    <location>
        <begin position="113"/>
        <end position="119"/>
    </location>
    <ligand>
        <name>ATP</name>
        <dbReference type="ChEBI" id="CHEBI:30616"/>
    </ligand>
</feature>
<feature type="binding site" evidence="1">
    <location>
        <begin position="155"/>
        <end position="156"/>
    </location>
    <ligand>
        <name>UDP-N-acetyl-alpha-D-muramoyl-L-alanyl-D-glutamate</name>
        <dbReference type="ChEBI" id="CHEBI:83900"/>
    </ligand>
</feature>
<feature type="binding site" evidence="1">
    <location>
        <position position="182"/>
    </location>
    <ligand>
        <name>UDP-N-acetyl-alpha-D-muramoyl-L-alanyl-D-glutamate</name>
        <dbReference type="ChEBI" id="CHEBI:83900"/>
    </ligand>
</feature>
<feature type="binding site" evidence="1">
    <location>
        <position position="188"/>
    </location>
    <ligand>
        <name>UDP-N-acetyl-alpha-D-muramoyl-L-alanyl-D-glutamate</name>
        <dbReference type="ChEBI" id="CHEBI:83900"/>
    </ligand>
</feature>
<feature type="binding site" evidence="1">
    <location>
        <position position="190"/>
    </location>
    <ligand>
        <name>UDP-N-acetyl-alpha-D-muramoyl-L-alanyl-D-glutamate</name>
        <dbReference type="ChEBI" id="CHEBI:83900"/>
    </ligand>
</feature>
<feature type="binding site" evidence="1">
    <location>
        <position position="388"/>
    </location>
    <ligand>
        <name>meso-2,6-diaminopimelate</name>
        <dbReference type="ChEBI" id="CHEBI:57791"/>
    </ligand>
</feature>
<feature type="binding site" evidence="1">
    <location>
        <begin position="412"/>
        <end position="415"/>
    </location>
    <ligand>
        <name>meso-2,6-diaminopimelate</name>
        <dbReference type="ChEBI" id="CHEBI:57791"/>
    </ligand>
</feature>
<feature type="binding site" evidence="1">
    <location>
        <position position="463"/>
    </location>
    <ligand>
        <name>meso-2,6-diaminopimelate</name>
        <dbReference type="ChEBI" id="CHEBI:57791"/>
    </ligand>
</feature>
<feature type="binding site" evidence="1">
    <location>
        <position position="467"/>
    </location>
    <ligand>
        <name>meso-2,6-diaminopimelate</name>
        <dbReference type="ChEBI" id="CHEBI:57791"/>
    </ligand>
</feature>
<feature type="modified residue" description="N6-carboxylysine" evidence="1">
    <location>
        <position position="222"/>
    </location>
</feature>
<keyword id="KW-0067">ATP-binding</keyword>
<keyword id="KW-0131">Cell cycle</keyword>
<keyword id="KW-0132">Cell division</keyword>
<keyword id="KW-0133">Cell shape</keyword>
<keyword id="KW-0961">Cell wall biogenesis/degradation</keyword>
<keyword id="KW-0963">Cytoplasm</keyword>
<keyword id="KW-0436">Ligase</keyword>
<keyword id="KW-0460">Magnesium</keyword>
<keyword id="KW-0547">Nucleotide-binding</keyword>
<keyword id="KW-0573">Peptidoglycan synthesis</keyword>
<keyword id="KW-1185">Reference proteome</keyword>
<evidence type="ECO:0000255" key="1">
    <source>
        <dbReference type="HAMAP-Rule" id="MF_00208"/>
    </source>
</evidence>
<gene>
    <name evidence="1" type="primary">murE</name>
    <name type="ordered locus">CBU_0123</name>
</gene>
<sequence>MNGKYLSQLLDAKNKALTADVLIKALQTDSRKIQPGDLFIAYPGLQVDGRDYIKEALDKKAAAVFYEANQYNPSIQTKVPLIPFENLQHRIGEIAARFYDDPSCEMEIIGITGTNGKTSCAQFIAQALQSQGIRCGVIGTLGYGFLGSLHKTSHTTPEPIQLQQAFAEMRKQGAKAIAMEVSSHALHQRRVEGVQFDIAVFTQLSRDHLDYHGDMENYARAKELLFQQPGLHTGVVNCDDALGKRIIAHYRHQLTLVGYSANGVKDDRVSSVIASAIQPLAQGFSVEVQTPWGEGTFTTPLFGRFNISNLLAVLSVLCLCEIPFDKALLELSQLRNVPGRMQVVDSQRQPQIIVDYAHTPDALEKALTALREHCQGRLICVFGCGGDRDRGKRPQMAAVAEQHADQIILTNDNPRTESPLTIIQDIQAGFKNKNAVLVKLDRAEAIRYAVQMAAVNDIVLIAGKGHETTQTIADQVLPFNDVEEAKKAL</sequence>